<organism evidence="12">
    <name type="scientific">Caenorhabditis elegans</name>
    <dbReference type="NCBI Taxonomy" id="6239"/>
    <lineage>
        <taxon>Eukaryota</taxon>
        <taxon>Metazoa</taxon>
        <taxon>Ecdysozoa</taxon>
        <taxon>Nematoda</taxon>
        <taxon>Chromadorea</taxon>
        <taxon>Rhabditida</taxon>
        <taxon>Rhabditina</taxon>
        <taxon>Rhabditomorpha</taxon>
        <taxon>Rhabditoidea</taxon>
        <taxon>Rhabditidae</taxon>
        <taxon>Peloderinae</taxon>
        <taxon>Caenorhabditis</taxon>
    </lineage>
</organism>
<accession>G5EDZ9</accession>
<dbReference type="EMBL" id="AJ310669">
    <property type="protein sequence ID" value="CAC33821.1"/>
    <property type="molecule type" value="mRNA"/>
</dbReference>
<dbReference type="EMBL" id="BX284604">
    <property type="protein sequence ID" value="CCD72381.1"/>
    <property type="molecule type" value="Genomic_DNA"/>
</dbReference>
<dbReference type="PIR" id="T33740">
    <property type="entry name" value="T33740"/>
</dbReference>
<dbReference type="RefSeq" id="NP_500915.1">
    <property type="nucleotide sequence ID" value="NM_068514.6"/>
</dbReference>
<dbReference type="SMR" id="G5EDZ9"/>
<dbReference type="FunCoup" id="G5EDZ9">
    <property type="interactions" value="70"/>
</dbReference>
<dbReference type="IntAct" id="G5EDZ9">
    <property type="interactions" value="1"/>
</dbReference>
<dbReference type="STRING" id="6239.K08B4.6.1"/>
<dbReference type="MEROPS" id="I25.032"/>
<dbReference type="GlyCosmos" id="G5EDZ9">
    <property type="glycosylation" value="1 site, No reported glycans"/>
</dbReference>
<dbReference type="PaxDb" id="6239-K08B4.6"/>
<dbReference type="PeptideAtlas" id="G5EDZ9"/>
<dbReference type="EnsemblMetazoa" id="K08B4.6.1">
    <property type="protein sequence ID" value="K08B4.6.1"/>
    <property type="gene ID" value="WBGene00000535"/>
</dbReference>
<dbReference type="GeneID" id="177372"/>
<dbReference type="KEGG" id="cel:CELE_K08B4.6"/>
<dbReference type="AGR" id="WB:WBGene00000535"/>
<dbReference type="CTD" id="177372"/>
<dbReference type="WormBase" id="K08B4.6">
    <property type="protein sequence ID" value="CE18035"/>
    <property type="gene ID" value="WBGene00000535"/>
    <property type="gene designation" value="cpi-1"/>
</dbReference>
<dbReference type="eggNOG" id="ENOG502SC50">
    <property type="taxonomic scope" value="Eukaryota"/>
</dbReference>
<dbReference type="GeneTree" id="ENSGT00390000011592"/>
<dbReference type="HOGENOM" id="CLU_1847012_0_0_1"/>
<dbReference type="InParanoid" id="G5EDZ9"/>
<dbReference type="OMA" id="ITTANCP"/>
<dbReference type="OrthoDB" id="1908104at2759"/>
<dbReference type="PRO" id="PR:G5EDZ9"/>
<dbReference type="Proteomes" id="UP000001940">
    <property type="component" value="Chromosome IV"/>
</dbReference>
<dbReference type="Bgee" id="WBGene00000535">
    <property type="expression patterns" value="Expressed in adult organism and 4 other cell types or tissues"/>
</dbReference>
<dbReference type="GO" id="GO:0005737">
    <property type="term" value="C:cytoplasm"/>
    <property type="evidence" value="ECO:0000318"/>
    <property type="project" value="GO_Central"/>
</dbReference>
<dbReference type="GO" id="GO:0005615">
    <property type="term" value="C:extracellular space"/>
    <property type="evidence" value="ECO:0000318"/>
    <property type="project" value="GO_Central"/>
</dbReference>
<dbReference type="GO" id="GO:0031982">
    <property type="term" value="C:vesicle"/>
    <property type="evidence" value="ECO:0000318"/>
    <property type="project" value="GO_Central"/>
</dbReference>
<dbReference type="GO" id="GO:0004869">
    <property type="term" value="F:cysteine-type endopeptidase inhibitor activity"/>
    <property type="evidence" value="ECO:0000314"/>
    <property type="project" value="UniProtKB"/>
</dbReference>
<dbReference type="CDD" id="cd00042">
    <property type="entry name" value="CY"/>
    <property type="match status" value="1"/>
</dbReference>
<dbReference type="Gene3D" id="3.10.450.10">
    <property type="match status" value="1"/>
</dbReference>
<dbReference type="InterPro" id="IPR000010">
    <property type="entry name" value="Cystatin_dom"/>
</dbReference>
<dbReference type="InterPro" id="IPR046350">
    <property type="entry name" value="Cystatin_sf"/>
</dbReference>
<dbReference type="PANTHER" id="PTHR46186">
    <property type="entry name" value="CYSTATIN"/>
    <property type="match status" value="1"/>
</dbReference>
<dbReference type="PANTHER" id="PTHR46186:SF14">
    <property type="entry name" value="CYSTATIN CPI-1"/>
    <property type="match status" value="1"/>
</dbReference>
<dbReference type="Pfam" id="PF00031">
    <property type="entry name" value="Cystatin"/>
    <property type="match status" value="1"/>
</dbReference>
<dbReference type="SMART" id="SM00043">
    <property type="entry name" value="CY"/>
    <property type="match status" value="1"/>
</dbReference>
<dbReference type="SUPFAM" id="SSF54403">
    <property type="entry name" value="Cystatin/monellin"/>
    <property type="match status" value="1"/>
</dbReference>
<evidence type="ECO:0000250" key="1">
    <source>
        <dbReference type="UniProtKB" id="P01038"/>
    </source>
</evidence>
<evidence type="ECO:0000255" key="2"/>
<evidence type="ECO:0000255" key="3">
    <source>
        <dbReference type="PROSITE-ProRule" id="PRU00498"/>
    </source>
</evidence>
<evidence type="ECO:0000255" key="4">
    <source>
        <dbReference type="RuleBase" id="RU362130"/>
    </source>
</evidence>
<evidence type="ECO:0000269" key="5">
    <source>
    </source>
</evidence>
<evidence type="ECO:0000269" key="6">
    <source>
    </source>
</evidence>
<evidence type="ECO:0000269" key="7">
    <source>
    </source>
</evidence>
<evidence type="ECO:0000269" key="8">
    <source>
    </source>
</evidence>
<evidence type="ECO:0000303" key="9">
    <source>
    </source>
</evidence>
<evidence type="ECO:0000305" key="10"/>
<evidence type="ECO:0000312" key="11">
    <source>
        <dbReference type="EMBL" id="CAC33821.1"/>
    </source>
</evidence>
<evidence type="ECO:0000312" key="12">
    <source>
        <dbReference type="Proteomes" id="UP000001940"/>
    </source>
</evidence>
<evidence type="ECO:0000312" key="13">
    <source>
        <dbReference type="WormBase" id="K08B4.6"/>
    </source>
</evidence>
<protein>
    <recommendedName>
        <fullName evidence="10">Cystatin cpi-1</fullName>
    </recommendedName>
    <alternativeName>
        <fullName evidence="9">Cysele1</fullName>
    </alternativeName>
</protein>
<gene>
    <name evidence="13" type="primary">cpi-1</name>
    <name evidence="13" type="ORF">K08B4.6</name>
</gene>
<comment type="function">
    <text evidence="5 6 8">Cysteine protease inhibitor which inhibits members of the peptidase C1 family (PubMed:12704112, PubMed:15664654). Does not inhibit asparaginyl endopeptidase (PubMed:15664654). May play a protective role against exogenous cysteine proteases derived from soil bacteria or fungi, or rotting fruits and vegetation (PubMed:24001183).</text>
</comment>
<comment type="developmental stage">
    <text evidence="7">Expressed in embryos, larvae and adults (at protein level). Expression transiently increases prior to the larval L2/L3, L3/L4 and L4/adult molts.</text>
</comment>
<comment type="similarity">
    <text evidence="2 4">Belongs to the cystatin family.</text>
</comment>
<feature type="signal peptide" evidence="2">
    <location>
        <begin position="1"/>
        <end position="19"/>
    </location>
</feature>
<feature type="chain" id="PRO_5015019726" description="Cystatin cpi-1" evidence="2">
    <location>
        <begin position="20"/>
        <end position="139"/>
    </location>
</feature>
<feature type="short sequence motif" description="Secondary area of contact" evidence="10">
    <location>
        <begin position="65"/>
        <end position="69"/>
    </location>
</feature>
<feature type="site" description="Reactive site" evidence="10">
    <location>
        <position position="23"/>
    </location>
</feature>
<feature type="glycosylation site" description="N-linked (GlcNAc...) asparagine" evidence="3">
    <location>
        <position position="29"/>
    </location>
</feature>
<feature type="disulfide bond" evidence="1">
    <location>
        <begin position="83"/>
        <end position="99"/>
    </location>
</feature>
<keyword id="KW-1015">Disulfide bond</keyword>
<keyword id="KW-0325">Glycoprotein</keyword>
<keyword id="KW-0646">Protease inhibitor</keyword>
<keyword id="KW-1185">Reference proteome</keyword>
<keyword id="KW-0732">Signal</keyword>
<keyword id="KW-0789">Thiol protease inhibitor</keyword>
<reference evidence="11" key="1">
    <citation type="journal article" date="2003" name="Infect. Immun.">
        <title>Parasite-specific immunomodulatory functions of filarial cystatin.</title>
        <authorList>
            <person name="Schierack P.S."/>
            <person name="Lucius R."/>
            <person name="Sonnenburg B."/>
            <person name="Schilling K."/>
            <person name="Hartmann S."/>
        </authorList>
    </citation>
    <scope>NUCLEOTIDE SEQUENCE [MRNA]</scope>
    <scope>FUNCTION</scope>
</reference>
<reference evidence="12" key="2">
    <citation type="journal article" date="1998" name="Science">
        <title>Genome sequence of the nematode C. elegans: a platform for investigating biology.</title>
        <authorList>
            <consortium name="The C. elegans sequencing consortium"/>
        </authorList>
    </citation>
    <scope>NUCLEOTIDE SEQUENCE [LARGE SCALE GENOMIC DNA]</scope>
    <source>
        <strain evidence="12">Bristol N2</strain>
    </source>
</reference>
<reference evidence="10" key="3">
    <citation type="journal article" date="2005" name="Mol. Biochem. Parasitol.">
        <title>Bm-CPI-2, a cystatin from Brugia malayi nematode parasites, differs from Caenorhabditis elegans cystatins in a specific site mediating inhibition of the antigen-processing enzyme AEP.</title>
        <authorList>
            <person name="Murray J."/>
            <person name="Manoury B."/>
            <person name="Balic A."/>
            <person name="Watts C."/>
            <person name="Maizels R.M."/>
        </authorList>
    </citation>
    <scope>FUNCTION</scope>
</reference>
<reference evidence="10" key="4">
    <citation type="journal article" date="2006" name="J. Biol. Chem.">
        <title>The Caenorhabditis elegans CPI-2a cystatin-like inhibitor has an essential regulatory role during oogenesis and fertilization.</title>
        <authorList>
            <person name="Hashmi S."/>
            <person name="Zhang J."/>
            <person name="Oksov Y."/>
            <person name="Ji Q."/>
            <person name="Lustigman S."/>
        </authorList>
    </citation>
    <scope>DEVELOPMENTAL STAGE</scope>
</reference>
<reference evidence="10" key="5">
    <citation type="journal article" date="2014" name="Parasitology">
        <title>Developing a rapid throughput screen for detection of nematicidal activity of plant cysteine proteinases: the role of Caenorhabditis elegans cystatins.</title>
        <authorList>
            <person name="Phiri A.M."/>
            <person name="De Pomerai D."/>
            <person name="Buttle D.J."/>
            <person name="Behnke J.M."/>
        </authorList>
    </citation>
    <scope>FUNCTION</scope>
</reference>
<sequence>MRFILLIALVFAVLDGINCQIAGGLSDVNASEYTGAAWNSVPEINSKNNGQNYMVPIKVVKAQVQVVAGTNTVLEVLVGESTCPRQGSVQASQVTAANCPLKSGGKRELYKVSIWEKPWENFKQTKAEKIRGVKPDEKI</sequence>
<proteinExistence type="evidence at protein level"/>
<name>CPI1_CAEEL</name>